<reference key="1">
    <citation type="journal article" date="1992" name="J. Bacteriol.">
        <title>Nucleotide sequence and characterization of four additional genes of the hydrogenase structural operon from Rhizobium leguminosarum bv. viciae.</title>
        <authorList>
            <person name="Hidalgo E."/>
            <person name="Palacios J.M."/>
            <person name="Murillo J."/>
            <person name="Ruiz-Argueso T."/>
        </authorList>
    </citation>
    <scope>NUCLEOTIDE SEQUENCE [GENOMIC DNA]</scope>
    <source>
        <strain>UPM791</strain>
    </source>
</reference>
<reference key="2">
    <citation type="journal article" date="1997" name="Mol. Plant Microbe Interact.">
        <title>Organization of the hup-region and its differential transcription in non-symbiotic and symbiotic cells of Rhizobium leguminosarum bv. viciae B10.</title>
        <authorList>
            <person name="Brito B."/>
            <person name="Palacios J.M."/>
            <person name="Imperial J."/>
            <person name="Ruiz-Argueso T."/>
            <person name="Yang W.C."/>
            <person name="Bisseling T."/>
            <person name="Schmitt H."/>
            <person name="Kerl V."/>
            <person name="Bauer T."/>
            <person name="Kokotek W."/>
            <person name="Lotz W."/>
        </authorList>
    </citation>
    <scope>NUCLEOTIDE SEQUENCE [GENOMIC DNA]</scope>
    <source>
        <strain>B10</strain>
    </source>
</reference>
<comment type="similarity">
    <text evidence="1">Belongs to the HupF/HypC family.</text>
</comment>
<accession>P27651</accession>
<protein>
    <recommendedName>
        <fullName>Hydrogenase expression/formation protein HupF</fullName>
    </recommendedName>
</protein>
<proteinExistence type="inferred from homology"/>
<feature type="chain" id="PRO_0000201391" description="Hydrogenase expression/formation protein HupF">
    <location>
        <begin position="1"/>
        <end position="98"/>
    </location>
</feature>
<sequence>MCIGIPMRVVVGSEFIAQCERHGAISSISLMLVGPQAPGTHLLTHLGSAIRVLDADEARAIDDALAGLAEAVEGRAFDMLFADLISREPELPPHLRGE</sequence>
<organism>
    <name type="scientific">Rhizobium leguminosarum bv. viciae</name>
    <dbReference type="NCBI Taxonomy" id="387"/>
    <lineage>
        <taxon>Bacteria</taxon>
        <taxon>Pseudomonadati</taxon>
        <taxon>Pseudomonadota</taxon>
        <taxon>Alphaproteobacteria</taxon>
        <taxon>Hyphomicrobiales</taxon>
        <taxon>Rhizobiaceae</taxon>
        <taxon>Rhizobium/Agrobacterium group</taxon>
        <taxon>Rhizobium</taxon>
    </lineage>
</organism>
<name>HUPF_RHILV</name>
<gene>
    <name type="primary">hupF</name>
</gene>
<evidence type="ECO:0000305" key="1"/>
<dbReference type="EMBL" id="X52974">
    <property type="protein sequence ID" value="CAA37153.1"/>
    <property type="molecule type" value="Genomic_DNA"/>
</dbReference>
<dbReference type="EMBL" id="Z36981">
    <property type="protein sequence ID" value="CAA85435.1"/>
    <property type="molecule type" value="Genomic_DNA"/>
</dbReference>
<dbReference type="PIR" id="D41892">
    <property type="entry name" value="D41892"/>
</dbReference>
<dbReference type="RefSeq" id="WP_018517050.1">
    <property type="nucleotide sequence ID" value="NZ_WIEJ01000010.1"/>
</dbReference>
<dbReference type="SMR" id="P27651"/>
<dbReference type="GO" id="GO:1902670">
    <property type="term" value="F:carbon dioxide binding"/>
    <property type="evidence" value="ECO:0007669"/>
    <property type="project" value="TreeGrafter"/>
</dbReference>
<dbReference type="GO" id="GO:0005506">
    <property type="term" value="F:iron ion binding"/>
    <property type="evidence" value="ECO:0007669"/>
    <property type="project" value="TreeGrafter"/>
</dbReference>
<dbReference type="GO" id="GO:0051604">
    <property type="term" value="P:protein maturation"/>
    <property type="evidence" value="ECO:0007669"/>
    <property type="project" value="TreeGrafter"/>
</dbReference>
<dbReference type="Gene3D" id="2.30.30.140">
    <property type="match status" value="1"/>
</dbReference>
<dbReference type="InterPro" id="IPR019812">
    <property type="entry name" value="Hydgase_assmbl_chp_CS"/>
</dbReference>
<dbReference type="InterPro" id="IPR001109">
    <property type="entry name" value="Hydrogenase_HupF/HypC"/>
</dbReference>
<dbReference type="NCBIfam" id="TIGR00074">
    <property type="entry name" value="hypC_hupF"/>
    <property type="match status" value="1"/>
</dbReference>
<dbReference type="PANTHER" id="PTHR35177">
    <property type="entry name" value="HYDROGENASE MATURATION FACTOR HYBG"/>
    <property type="match status" value="1"/>
</dbReference>
<dbReference type="PANTHER" id="PTHR35177:SF2">
    <property type="entry name" value="HYDROGENASE MATURATION FACTOR HYBG"/>
    <property type="match status" value="1"/>
</dbReference>
<dbReference type="Pfam" id="PF01455">
    <property type="entry name" value="HupF_HypC"/>
    <property type="match status" value="1"/>
</dbReference>
<dbReference type="PRINTS" id="PR00445">
    <property type="entry name" value="HUPFHYPC"/>
</dbReference>
<dbReference type="SUPFAM" id="SSF159127">
    <property type="entry name" value="HupF/HypC-like"/>
    <property type="match status" value="1"/>
</dbReference>
<dbReference type="PROSITE" id="PS01097">
    <property type="entry name" value="HUPF_HYPC"/>
    <property type="match status" value="1"/>
</dbReference>